<reference key="1">
    <citation type="journal article" date="1990" name="Proc. Natl. Acad. Sci. U.S.A.">
        <title>Retron for the 67-base multicopy single-stranded DNA from Escherichia coli: a potential transposable element encoding both reverse transcriptase and Dam methylase functions.</title>
        <authorList>
            <person name="Hsu M.-Y."/>
            <person name="Inouye M."/>
            <person name="Inouye S."/>
        </authorList>
    </citation>
    <scope>NUCLEOTIDE SEQUENCE [GENOMIC DNA]</scope>
    <source>
        <strain>O1:NM / CL-1</strain>
    </source>
</reference>
<feature type="chain" id="PRO_0000066453" description="Protein ORFa in retron Ec67">
    <location>
        <begin position="1"/>
        <end position="108"/>
    </location>
</feature>
<keyword id="KW-0814">Transposable element</keyword>
<proteinExistence type="predicted"/>
<name>YR7A_ECOLX</name>
<accession>P21315</accession>
<sequence length="108" mass="12193">MLTYLFCDPSISFVPIWVLVTITTGSPQANRRCCIMTPNISITLNTPHVTIERYSELTGLSIDTINDMLADGRIPRHRLRKDKKREKVMINLAALTVDALTDCNVVFN</sequence>
<protein>
    <recommendedName>
        <fullName evidence="1">Protein ORFa in retron Ec67</fullName>
    </recommendedName>
</protein>
<evidence type="ECO:0000303" key="1">
    <source>
    </source>
</evidence>
<organism>
    <name type="scientific">Escherichia coli</name>
    <dbReference type="NCBI Taxonomy" id="562"/>
    <lineage>
        <taxon>Bacteria</taxon>
        <taxon>Pseudomonadati</taxon>
        <taxon>Pseudomonadota</taxon>
        <taxon>Gammaproteobacteria</taxon>
        <taxon>Enterobacterales</taxon>
        <taxon>Enterobacteriaceae</taxon>
        <taxon>Escherichia</taxon>
    </lineage>
</organism>
<dbReference type="EMBL" id="M55249">
    <property type="protein sequence ID" value="AAA23391.1"/>
    <property type="molecule type" value="Genomic_DNA"/>
</dbReference>
<dbReference type="PIR" id="JQ0856">
    <property type="entry name" value="JQ0856"/>
</dbReference>
<dbReference type="SMR" id="P21315"/>